<comment type="function">
    <text evidence="1">Catalyzes the phosphorylation of D-fructose 6-phosphate to fructose 1,6-bisphosphate by ATP, the first committing step of glycolysis.</text>
</comment>
<comment type="catalytic activity">
    <reaction evidence="1">
        <text>beta-D-fructose 6-phosphate + ATP = beta-D-fructose 1,6-bisphosphate + ADP + H(+)</text>
        <dbReference type="Rhea" id="RHEA:16109"/>
        <dbReference type="ChEBI" id="CHEBI:15378"/>
        <dbReference type="ChEBI" id="CHEBI:30616"/>
        <dbReference type="ChEBI" id="CHEBI:32966"/>
        <dbReference type="ChEBI" id="CHEBI:57634"/>
        <dbReference type="ChEBI" id="CHEBI:456216"/>
        <dbReference type="EC" id="2.7.1.11"/>
    </reaction>
</comment>
<comment type="cofactor">
    <cofactor evidence="1">
        <name>Mg(2+)</name>
        <dbReference type="ChEBI" id="CHEBI:18420"/>
    </cofactor>
</comment>
<comment type="activity regulation">
    <text evidence="1">Allosterically activated by ADP and other diphosphonucleosides, and allosterically inhibited by phosphoenolpyruvate.</text>
</comment>
<comment type="pathway">
    <text evidence="1">Carbohydrate degradation; glycolysis; D-glyceraldehyde 3-phosphate and glycerone phosphate from D-glucose: step 3/4.</text>
</comment>
<comment type="subunit">
    <text evidence="1">Homotetramer.</text>
</comment>
<comment type="subcellular location">
    <subcellularLocation>
        <location evidence="1">Cytoplasm</location>
    </subcellularLocation>
</comment>
<comment type="similarity">
    <text evidence="1">Belongs to the phosphofructokinase type A (PFKA) family. ATP-dependent PFK group I subfamily. Prokaryotic clade 'B1' sub-subfamily.</text>
</comment>
<reference key="1">
    <citation type="journal article" date="2003" name="Proc. Natl. Acad. Sci. U.S.A.">
        <title>The genome sequence of Blochmannia floridanus: comparative analysis of reduced genomes.</title>
        <authorList>
            <person name="Gil R."/>
            <person name="Silva F.J."/>
            <person name="Zientz E."/>
            <person name="Delmotte F."/>
            <person name="Gonzalez-Candelas F."/>
            <person name="Latorre A."/>
            <person name="Rausell C."/>
            <person name="Kamerbeek J."/>
            <person name="Gadau J."/>
            <person name="Hoelldobler B."/>
            <person name="van Ham R.C.H.J."/>
            <person name="Gross R."/>
            <person name="Moya A."/>
        </authorList>
    </citation>
    <scope>NUCLEOTIDE SEQUENCE [LARGE SCALE GENOMIC DNA]</scope>
</reference>
<sequence length="320" mass="34990">MIKKIGVLTSGGDSPGMNAAIRGVVRAGLSEGIEVYGIYDGYLGLFQNRMMLLSYCSVSDIINKGGTVLGSSRFPELKKDMIRSVVMNNISKSHLDALVIIGGDGSYIGARRLSDLGCPCIGIPGTIDNDVAGTDYTIGYFTALETIIEAIDRLRDTSSSHQRISIVEVMGRYCGDLTISAAIAGGCEFVIIPELKFQMQDLVDKIKLNISKGKKHAIVAITERICNVFDLAQYIENETGKETRATVLGHIQRGGKPVAYDRILASRMGAYSIELLLKGYGRHCIGIENEKLVHHDINDATKYMRRSFRQDLLTTAKKLC</sequence>
<accession>Q7VRK9</accession>
<organism>
    <name type="scientific">Blochmanniella floridana</name>
    <dbReference type="NCBI Taxonomy" id="203907"/>
    <lineage>
        <taxon>Bacteria</taxon>
        <taxon>Pseudomonadati</taxon>
        <taxon>Pseudomonadota</taxon>
        <taxon>Gammaproteobacteria</taxon>
        <taxon>Enterobacterales</taxon>
        <taxon>Enterobacteriaceae</taxon>
        <taxon>ant endosymbionts</taxon>
        <taxon>Candidatus Blochmanniella</taxon>
    </lineage>
</organism>
<protein>
    <recommendedName>
        <fullName evidence="1">ATP-dependent 6-phosphofructokinase</fullName>
        <shortName evidence="1">ATP-PFK</shortName>
        <shortName evidence="1">Phosphofructokinase</shortName>
        <ecNumber evidence="1">2.7.1.11</ecNumber>
    </recommendedName>
    <alternativeName>
        <fullName evidence="1">Phosphohexokinase</fullName>
    </alternativeName>
</protein>
<evidence type="ECO:0000255" key="1">
    <source>
        <dbReference type="HAMAP-Rule" id="MF_00339"/>
    </source>
</evidence>
<keyword id="KW-0021">Allosteric enzyme</keyword>
<keyword id="KW-0067">ATP-binding</keyword>
<keyword id="KW-0963">Cytoplasm</keyword>
<keyword id="KW-0324">Glycolysis</keyword>
<keyword id="KW-0418">Kinase</keyword>
<keyword id="KW-0460">Magnesium</keyword>
<keyword id="KW-0479">Metal-binding</keyword>
<keyword id="KW-0547">Nucleotide-binding</keyword>
<keyword id="KW-1185">Reference proteome</keyword>
<keyword id="KW-0808">Transferase</keyword>
<gene>
    <name evidence="1" type="primary">pfkA</name>
    <name type="ordered locus">Bfl602</name>
</gene>
<proteinExistence type="inferred from homology"/>
<dbReference type="EC" id="2.7.1.11" evidence="1"/>
<dbReference type="EMBL" id="BX248583">
    <property type="protein sequence ID" value="CAD83277.1"/>
    <property type="molecule type" value="Genomic_DNA"/>
</dbReference>
<dbReference type="SMR" id="Q7VRK9"/>
<dbReference type="STRING" id="203907.Bfl602"/>
<dbReference type="KEGG" id="bfl:Bfl602"/>
<dbReference type="eggNOG" id="COG0205">
    <property type="taxonomic scope" value="Bacteria"/>
</dbReference>
<dbReference type="HOGENOM" id="CLU_020655_0_1_6"/>
<dbReference type="OrthoDB" id="9802503at2"/>
<dbReference type="UniPathway" id="UPA00109">
    <property type="reaction ID" value="UER00182"/>
</dbReference>
<dbReference type="Proteomes" id="UP000002192">
    <property type="component" value="Chromosome"/>
</dbReference>
<dbReference type="GO" id="GO:0005945">
    <property type="term" value="C:6-phosphofructokinase complex"/>
    <property type="evidence" value="ECO:0007669"/>
    <property type="project" value="TreeGrafter"/>
</dbReference>
<dbReference type="GO" id="GO:0003872">
    <property type="term" value="F:6-phosphofructokinase activity"/>
    <property type="evidence" value="ECO:0007669"/>
    <property type="project" value="UniProtKB-UniRule"/>
</dbReference>
<dbReference type="GO" id="GO:0016208">
    <property type="term" value="F:AMP binding"/>
    <property type="evidence" value="ECO:0007669"/>
    <property type="project" value="TreeGrafter"/>
</dbReference>
<dbReference type="GO" id="GO:0005524">
    <property type="term" value="F:ATP binding"/>
    <property type="evidence" value="ECO:0007669"/>
    <property type="project" value="UniProtKB-KW"/>
</dbReference>
<dbReference type="GO" id="GO:0070095">
    <property type="term" value="F:fructose-6-phosphate binding"/>
    <property type="evidence" value="ECO:0007669"/>
    <property type="project" value="TreeGrafter"/>
</dbReference>
<dbReference type="GO" id="GO:0042802">
    <property type="term" value="F:identical protein binding"/>
    <property type="evidence" value="ECO:0007669"/>
    <property type="project" value="TreeGrafter"/>
</dbReference>
<dbReference type="GO" id="GO:0046872">
    <property type="term" value="F:metal ion binding"/>
    <property type="evidence" value="ECO:0007669"/>
    <property type="project" value="UniProtKB-KW"/>
</dbReference>
<dbReference type="GO" id="GO:0048029">
    <property type="term" value="F:monosaccharide binding"/>
    <property type="evidence" value="ECO:0007669"/>
    <property type="project" value="TreeGrafter"/>
</dbReference>
<dbReference type="GO" id="GO:0061621">
    <property type="term" value="P:canonical glycolysis"/>
    <property type="evidence" value="ECO:0007669"/>
    <property type="project" value="TreeGrafter"/>
</dbReference>
<dbReference type="GO" id="GO:0030388">
    <property type="term" value="P:fructose 1,6-bisphosphate metabolic process"/>
    <property type="evidence" value="ECO:0007669"/>
    <property type="project" value="TreeGrafter"/>
</dbReference>
<dbReference type="GO" id="GO:0006002">
    <property type="term" value="P:fructose 6-phosphate metabolic process"/>
    <property type="evidence" value="ECO:0007669"/>
    <property type="project" value="InterPro"/>
</dbReference>
<dbReference type="FunFam" id="3.40.50.450:FF:000001">
    <property type="entry name" value="ATP-dependent 6-phosphofructokinase"/>
    <property type="match status" value="1"/>
</dbReference>
<dbReference type="FunFam" id="3.40.50.460:FF:000002">
    <property type="entry name" value="ATP-dependent 6-phosphofructokinase"/>
    <property type="match status" value="1"/>
</dbReference>
<dbReference type="Gene3D" id="3.40.50.450">
    <property type="match status" value="1"/>
</dbReference>
<dbReference type="Gene3D" id="3.40.50.460">
    <property type="entry name" value="Phosphofructokinase domain"/>
    <property type="match status" value="1"/>
</dbReference>
<dbReference type="HAMAP" id="MF_00339">
    <property type="entry name" value="Phosphofructokinase_I_B1"/>
    <property type="match status" value="1"/>
</dbReference>
<dbReference type="InterPro" id="IPR022953">
    <property type="entry name" value="ATP_PFK"/>
</dbReference>
<dbReference type="InterPro" id="IPR012003">
    <property type="entry name" value="ATP_PFK_prok-type"/>
</dbReference>
<dbReference type="InterPro" id="IPR012828">
    <property type="entry name" value="PFKA_ATP_prok"/>
</dbReference>
<dbReference type="InterPro" id="IPR015912">
    <property type="entry name" value="Phosphofructokinase_CS"/>
</dbReference>
<dbReference type="InterPro" id="IPR000023">
    <property type="entry name" value="Phosphofructokinase_dom"/>
</dbReference>
<dbReference type="InterPro" id="IPR035966">
    <property type="entry name" value="PKF_sf"/>
</dbReference>
<dbReference type="NCBIfam" id="TIGR02482">
    <property type="entry name" value="PFKA_ATP"/>
    <property type="match status" value="1"/>
</dbReference>
<dbReference type="NCBIfam" id="NF002872">
    <property type="entry name" value="PRK03202.1"/>
    <property type="match status" value="1"/>
</dbReference>
<dbReference type="PANTHER" id="PTHR13697:SF4">
    <property type="entry name" value="ATP-DEPENDENT 6-PHOSPHOFRUCTOKINASE"/>
    <property type="match status" value="1"/>
</dbReference>
<dbReference type="PANTHER" id="PTHR13697">
    <property type="entry name" value="PHOSPHOFRUCTOKINASE"/>
    <property type="match status" value="1"/>
</dbReference>
<dbReference type="Pfam" id="PF00365">
    <property type="entry name" value="PFK"/>
    <property type="match status" value="1"/>
</dbReference>
<dbReference type="PIRSF" id="PIRSF000532">
    <property type="entry name" value="ATP_PFK_prok"/>
    <property type="match status" value="1"/>
</dbReference>
<dbReference type="PRINTS" id="PR00476">
    <property type="entry name" value="PHFRCTKINASE"/>
</dbReference>
<dbReference type="SUPFAM" id="SSF53784">
    <property type="entry name" value="Phosphofructokinase"/>
    <property type="match status" value="1"/>
</dbReference>
<dbReference type="PROSITE" id="PS00433">
    <property type="entry name" value="PHOSPHOFRUCTOKINASE"/>
    <property type="match status" value="1"/>
</dbReference>
<name>PFKA_BLOFL</name>
<feature type="chain" id="PRO_1000059748" description="ATP-dependent 6-phosphofructokinase">
    <location>
        <begin position="1"/>
        <end position="320"/>
    </location>
</feature>
<feature type="active site" description="Proton acceptor" evidence="1">
    <location>
        <position position="128"/>
    </location>
</feature>
<feature type="binding site" evidence="1">
    <location>
        <position position="12"/>
    </location>
    <ligand>
        <name>ATP</name>
        <dbReference type="ChEBI" id="CHEBI:30616"/>
    </ligand>
</feature>
<feature type="binding site" evidence="1">
    <location>
        <begin position="22"/>
        <end position="26"/>
    </location>
    <ligand>
        <name>ADP</name>
        <dbReference type="ChEBI" id="CHEBI:456216"/>
        <note>allosteric activator; ligand shared between dimeric partners</note>
    </ligand>
</feature>
<feature type="binding site" evidence="1">
    <location>
        <begin position="73"/>
        <end position="74"/>
    </location>
    <ligand>
        <name>ATP</name>
        <dbReference type="ChEBI" id="CHEBI:30616"/>
    </ligand>
</feature>
<feature type="binding site" evidence="1">
    <location>
        <begin position="103"/>
        <end position="106"/>
    </location>
    <ligand>
        <name>ATP</name>
        <dbReference type="ChEBI" id="CHEBI:30616"/>
    </ligand>
</feature>
<feature type="binding site" evidence="1">
    <location>
        <position position="104"/>
    </location>
    <ligand>
        <name>Mg(2+)</name>
        <dbReference type="ChEBI" id="CHEBI:18420"/>
        <note>catalytic</note>
    </ligand>
</feature>
<feature type="binding site" description="in other chain" evidence="1">
    <location>
        <begin position="126"/>
        <end position="128"/>
    </location>
    <ligand>
        <name>substrate</name>
        <note>ligand shared between dimeric partners</note>
    </ligand>
</feature>
<feature type="binding site" description="in other chain" evidence="1">
    <location>
        <position position="155"/>
    </location>
    <ligand>
        <name>ADP</name>
        <dbReference type="ChEBI" id="CHEBI:456216"/>
        <note>allosteric activator; ligand shared between dimeric partners</note>
    </ligand>
</feature>
<feature type="binding site" evidence="1">
    <location>
        <position position="163"/>
    </location>
    <ligand>
        <name>substrate</name>
        <note>ligand shared between dimeric partners</note>
    </ligand>
</feature>
<feature type="binding site" description="in other chain" evidence="1">
    <location>
        <begin position="170"/>
        <end position="172"/>
    </location>
    <ligand>
        <name>substrate</name>
        <note>ligand shared between dimeric partners</note>
    </ligand>
</feature>
<feature type="binding site" description="in other chain" evidence="1">
    <location>
        <begin position="186"/>
        <end position="188"/>
    </location>
    <ligand>
        <name>ADP</name>
        <dbReference type="ChEBI" id="CHEBI:456216"/>
        <note>allosteric activator; ligand shared between dimeric partners</note>
    </ligand>
</feature>
<feature type="binding site" description="in other chain" evidence="1">
    <location>
        <position position="212"/>
    </location>
    <ligand>
        <name>ADP</name>
        <dbReference type="ChEBI" id="CHEBI:456216"/>
        <note>allosteric activator; ligand shared between dimeric partners</note>
    </ligand>
</feature>
<feature type="binding site" description="in other chain" evidence="1">
    <location>
        <begin position="214"/>
        <end position="216"/>
    </location>
    <ligand>
        <name>ADP</name>
        <dbReference type="ChEBI" id="CHEBI:456216"/>
        <note>allosteric activator; ligand shared between dimeric partners</note>
    </ligand>
</feature>
<feature type="binding site" description="in other chain" evidence="1">
    <location>
        <position position="223"/>
    </location>
    <ligand>
        <name>substrate</name>
        <note>ligand shared between dimeric partners</note>
    </ligand>
</feature>
<feature type="binding site" evidence="1">
    <location>
        <position position="244"/>
    </location>
    <ligand>
        <name>substrate</name>
        <note>ligand shared between dimeric partners</note>
    </ligand>
</feature>
<feature type="binding site" description="in other chain" evidence="1">
    <location>
        <begin position="250"/>
        <end position="253"/>
    </location>
    <ligand>
        <name>substrate</name>
        <note>ligand shared between dimeric partners</note>
    </ligand>
</feature>